<name>RUFY2_HUMAN</name>
<accession>Q8WXA3</accession>
<accession>B3KXB2</accession>
<accession>B4DFR0</accession>
<accession>Q5TC48</accession>
<accession>Q8IW33</accession>
<accession>Q96P51</accession>
<accession>Q9P1Z1</accession>
<gene>
    <name type="primary">RUFY2</name>
    <name type="synonym">KIAA1537</name>
    <name type="synonym">RABIP4R</name>
</gene>
<sequence>MATKDPTAVERANLLNMAKLSIKGLIESALSFGRTLDSDYPPLQQFFVVMEHCLKHGLKVRKSFLSYNKTIWGPLELVEKLYPEAEEIGASVRDLPGLKTPLGRARAWLRLALMQKKMADYLRCLIIQRDLLSEFYEYHALMMEEEGAVIVGLLVGLNVIDANLCVKGEDLDSQVGVIDFSMYLKNEEDIGNKERNVQIAAILDQKNYVEELNRQLNSTVSSLHSRVDSLEKSNTKLIEELAIAKNNIIKLQEENHQLRSENKLILMKTQQHLEVTKVDVETELQTYKHSRQGLDEMYNEARRQLRDESQLRQDVENELAVQVSMKHEIELAMKLLEKDIHEKQDTLIGLRQQLEEVKAINIEMYQKLQGSEDGLKEKNEIIARLEEKTNKITAAMRQLEQRLQQAEKAQMEAEDEDEKYLQECLSKSDSLQKQISQKEKQLVQLETDLKIEKEWRQTLQEDLQKEKDALSHLRNETQQIISLKKEFLNLQDENQQLKKIYHEQEQALQELGNKLSESKLKIEDIKEANKALQGLVWLKDKEATHCKLCEKEFSLSKRKHHCRNCGEIFCNACSDNELPLPSSPKPVRVCDSCHALLIQRCSSNLP</sequence>
<proteinExistence type="evidence at protein level"/>
<evidence type="ECO:0000250" key="1"/>
<evidence type="ECO:0000255" key="2"/>
<evidence type="ECO:0000255" key="3">
    <source>
        <dbReference type="PROSITE-ProRule" id="PRU00091"/>
    </source>
</evidence>
<evidence type="ECO:0000255" key="4">
    <source>
        <dbReference type="PROSITE-ProRule" id="PRU00178"/>
    </source>
</evidence>
<evidence type="ECO:0000269" key="5">
    <source>
    </source>
</evidence>
<dbReference type="EMBL" id="AF461266">
    <property type="protein sequence ID" value="AAL67520.1"/>
    <property type="molecule type" value="mRNA"/>
</dbReference>
<dbReference type="EMBL" id="AB040970">
    <property type="protein sequence ID" value="BAA96061.1"/>
    <property type="molecule type" value="mRNA"/>
</dbReference>
<dbReference type="EMBL" id="AK127019">
    <property type="protein sequence ID" value="BAG54424.1"/>
    <property type="molecule type" value="mRNA"/>
</dbReference>
<dbReference type="EMBL" id="AK294211">
    <property type="protein sequence ID" value="BAG57521.1"/>
    <property type="molecule type" value="mRNA"/>
</dbReference>
<dbReference type="EMBL" id="AL136233">
    <property type="status" value="NOT_ANNOTATED_CDS"/>
    <property type="molecule type" value="Genomic_DNA"/>
</dbReference>
<dbReference type="EMBL" id="AC016395">
    <property type="status" value="NOT_ANNOTATED_CDS"/>
    <property type="molecule type" value="Genomic_DNA"/>
</dbReference>
<dbReference type="EMBL" id="CH471083">
    <property type="protein sequence ID" value="EAW54294.1"/>
    <property type="molecule type" value="Genomic_DNA"/>
</dbReference>
<dbReference type="EMBL" id="BC041092">
    <property type="protein sequence ID" value="AAH41092.1"/>
    <property type="molecule type" value="mRNA"/>
</dbReference>
<dbReference type="EMBL" id="AF411980">
    <property type="protein sequence ID" value="AAL04164.1"/>
    <property type="molecule type" value="mRNA"/>
</dbReference>
<dbReference type="CCDS" id="CCDS41534.1">
    <molecule id="Q8WXA3-3"/>
</dbReference>
<dbReference type="CCDS" id="CCDS44414.1">
    <molecule id="Q8WXA3-4"/>
</dbReference>
<dbReference type="CCDS" id="CCDS60544.1">
    <molecule id="Q8WXA3-5"/>
</dbReference>
<dbReference type="CCDS" id="CCDS81470.1">
    <molecule id="Q8WXA3-2"/>
</dbReference>
<dbReference type="RefSeq" id="NP_001035882.1">
    <molecule id="Q8WXA3-4"/>
    <property type="nucleotide sequence ID" value="NM_001042417.2"/>
</dbReference>
<dbReference type="RefSeq" id="NP_001265154.1">
    <molecule id="Q8WXA3-5"/>
    <property type="nucleotide sequence ID" value="NM_001278225.2"/>
</dbReference>
<dbReference type="RefSeq" id="NP_001317032.1">
    <molecule id="Q8WXA3-2"/>
    <property type="nucleotide sequence ID" value="NM_001330103.2"/>
</dbReference>
<dbReference type="RefSeq" id="NP_060457.4">
    <molecule id="Q8WXA3-3"/>
    <property type="nucleotide sequence ID" value="NM_017987.4"/>
</dbReference>
<dbReference type="RefSeq" id="XP_005270012.1">
    <property type="nucleotide sequence ID" value="XM_005269955.4"/>
</dbReference>
<dbReference type="RefSeq" id="XP_011538244.1">
    <molecule id="Q8WXA3-2"/>
    <property type="nucleotide sequence ID" value="XM_011539942.3"/>
</dbReference>
<dbReference type="RefSeq" id="XP_047281400.1">
    <molecule id="Q8WXA3-2"/>
    <property type="nucleotide sequence ID" value="XM_047425444.1"/>
</dbReference>
<dbReference type="RefSeq" id="XP_054222226.1">
    <molecule id="Q8WXA3-2"/>
    <property type="nucleotide sequence ID" value="XM_054366251.1"/>
</dbReference>
<dbReference type="SMR" id="Q8WXA3"/>
<dbReference type="BioGRID" id="120809">
    <property type="interactions" value="38"/>
</dbReference>
<dbReference type="FunCoup" id="Q8WXA3">
    <property type="interactions" value="2792"/>
</dbReference>
<dbReference type="IntAct" id="Q8WXA3">
    <property type="interactions" value="26"/>
</dbReference>
<dbReference type="MINT" id="Q8WXA3"/>
<dbReference type="STRING" id="9606.ENSP00000373420"/>
<dbReference type="GlyCosmos" id="Q8WXA3">
    <property type="glycosylation" value="1 site, 1 glycan"/>
</dbReference>
<dbReference type="iPTMnet" id="Q8WXA3"/>
<dbReference type="PhosphoSitePlus" id="Q8WXA3"/>
<dbReference type="BioMuta" id="RUFY2"/>
<dbReference type="DMDM" id="110287949"/>
<dbReference type="jPOST" id="Q8WXA3"/>
<dbReference type="MassIVE" id="Q8WXA3"/>
<dbReference type="PaxDb" id="9606-ENSP00000373420"/>
<dbReference type="PeptideAtlas" id="Q8WXA3"/>
<dbReference type="ProteomicsDB" id="4068"/>
<dbReference type="ProteomicsDB" id="74994">
    <molecule id="Q8WXA3-1"/>
</dbReference>
<dbReference type="ProteomicsDB" id="74995">
    <molecule id="Q8WXA3-2"/>
</dbReference>
<dbReference type="ProteomicsDB" id="74996">
    <molecule id="Q8WXA3-3"/>
</dbReference>
<dbReference type="ProteomicsDB" id="74997">
    <molecule id="Q8WXA3-4"/>
</dbReference>
<dbReference type="Pumba" id="Q8WXA3"/>
<dbReference type="Antibodypedia" id="45205">
    <property type="antibodies" value="80 antibodies from 20 providers"/>
</dbReference>
<dbReference type="DNASU" id="55680"/>
<dbReference type="Ensembl" id="ENST00000388768.6">
    <molecule id="Q8WXA3-3"/>
    <property type="protein sequence ID" value="ENSP00000373420.2"/>
    <property type="gene ID" value="ENSG00000204130.14"/>
</dbReference>
<dbReference type="Ensembl" id="ENST00000399200.7">
    <molecule id="Q8WXA3-4"/>
    <property type="protein sequence ID" value="ENSP00000382151.2"/>
    <property type="gene ID" value="ENSG00000204130.14"/>
</dbReference>
<dbReference type="Ensembl" id="ENST00000454950.6">
    <molecule id="Q8WXA3-5"/>
    <property type="protein sequence ID" value="ENSP00000404986.2"/>
    <property type="gene ID" value="ENSG00000204130.14"/>
</dbReference>
<dbReference type="Ensembl" id="ENST00000602465.6">
    <molecule id="Q8WXA3-2"/>
    <property type="protein sequence ID" value="ENSP00000473462.1"/>
    <property type="gene ID" value="ENSG00000204130.14"/>
</dbReference>
<dbReference type="GeneID" id="55680"/>
<dbReference type="KEGG" id="hsa:55680"/>
<dbReference type="MANE-Select" id="ENST00000602465.6">
    <property type="protein sequence ID" value="ENSP00000473462.1"/>
    <property type="RefSeq nucleotide sequence ID" value="NM_001330103.2"/>
    <property type="RefSeq protein sequence ID" value="NP_001317032.1"/>
</dbReference>
<dbReference type="UCSC" id="uc001job.4">
    <molecule id="Q8WXA3-2"/>
    <property type="organism name" value="human"/>
</dbReference>
<dbReference type="AGR" id="HGNC:19761"/>
<dbReference type="CTD" id="55680"/>
<dbReference type="DisGeNET" id="55680"/>
<dbReference type="GeneCards" id="RUFY2"/>
<dbReference type="HGNC" id="HGNC:19761">
    <property type="gene designation" value="RUFY2"/>
</dbReference>
<dbReference type="HPA" id="ENSG00000204130">
    <property type="expression patterns" value="Tissue enhanced (brain)"/>
</dbReference>
<dbReference type="MIM" id="610328">
    <property type="type" value="gene"/>
</dbReference>
<dbReference type="neXtProt" id="NX_Q8WXA3"/>
<dbReference type="OpenTargets" id="ENSG00000204130"/>
<dbReference type="PharmGKB" id="PA134935922"/>
<dbReference type="VEuPathDB" id="HostDB:ENSG00000204130"/>
<dbReference type="eggNOG" id="KOG4381">
    <property type="taxonomic scope" value="Eukaryota"/>
</dbReference>
<dbReference type="GeneTree" id="ENSGT00940000155595"/>
<dbReference type="HOGENOM" id="CLU_014576_3_1_1"/>
<dbReference type="InParanoid" id="Q8WXA3"/>
<dbReference type="OMA" id="IRHDECI"/>
<dbReference type="OrthoDB" id="79871at2759"/>
<dbReference type="PAN-GO" id="Q8WXA3">
    <property type="GO annotations" value="1 GO annotation based on evolutionary models"/>
</dbReference>
<dbReference type="PhylomeDB" id="Q8WXA3"/>
<dbReference type="TreeFam" id="TF323904"/>
<dbReference type="PathwayCommons" id="Q8WXA3"/>
<dbReference type="SignaLink" id="Q8WXA3"/>
<dbReference type="BioGRID-ORCS" id="55680">
    <property type="hits" value="14 hits in 1162 CRISPR screens"/>
</dbReference>
<dbReference type="ChiTaRS" id="RUFY2">
    <property type="organism name" value="human"/>
</dbReference>
<dbReference type="GenomeRNAi" id="55680"/>
<dbReference type="Pharos" id="Q8WXA3">
    <property type="development level" value="Tbio"/>
</dbReference>
<dbReference type="PRO" id="PR:Q8WXA3"/>
<dbReference type="Proteomes" id="UP000005640">
    <property type="component" value="Chromosome 10"/>
</dbReference>
<dbReference type="RNAct" id="Q8WXA3">
    <property type="molecule type" value="protein"/>
</dbReference>
<dbReference type="Bgee" id="ENSG00000204130">
    <property type="expression patterns" value="Expressed in calcaneal tendon and 133 other cell types or tissues"/>
</dbReference>
<dbReference type="ExpressionAtlas" id="Q8WXA3">
    <property type="expression patterns" value="baseline and differential"/>
</dbReference>
<dbReference type="GO" id="GO:0005737">
    <property type="term" value="C:cytoplasm"/>
    <property type="evidence" value="ECO:0000314"/>
    <property type="project" value="UniProtKB"/>
</dbReference>
<dbReference type="GO" id="GO:0005768">
    <property type="term" value="C:endosome"/>
    <property type="evidence" value="ECO:0000250"/>
    <property type="project" value="UniProtKB"/>
</dbReference>
<dbReference type="GO" id="GO:0005634">
    <property type="term" value="C:nucleus"/>
    <property type="evidence" value="ECO:0007669"/>
    <property type="project" value="UniProtKB-SubCell"/>
</dbReference>
<dbReference type="GO" id="GO:0017124">
    <property type="term" value="F:SH3 domain binding"/>
    <property type="evidence" value="ECO:0000353"/>
    <property type="project" value="UniProtKB"/>
</dbReference>
<dbReference type="GO" id="GO:0008270">
    <property type="term" value="F:zinc ion binding"/>
    <property type="evidence" value="ECO:0007669"/>
    <property type="project" value="UniProtKB-KW"/>
</dbReference>
<dbReference type="GO" id="GO:0030100">
    <property type="term" value="P:regulation of endocytosis"/>
    <property type="evidence" value="ECO:0000250"/>
    <property type="project" value="UniProtKB"/>
</dbReference>
<dbReference type="CDD" id="cd15759">
    <property type="entry name" value="FYVE_RUFY2"/>
    <property type="match status" value="1"/>
</dbReference>
<dbReference type="CDD" id="cd17695">
    <property type="entry name" value="RUN_RUFY2"/>
    <property type="match status" value="1"/>
</dbReference>
<dbReference type="FunFam" id="1.20.58.900:FF:000001">
    <property type="entry name" value="RUN and FYVE domain containing 2"/>
    <property type="match status" value="1"/>
</dbReference>
<dbReference type="FunFam" id="3.30.40.10:FF:000046">
    <property type="entry name" value="RUN and FYVE domain containing 2"/>
    <property type="match status" value="1"/>
</dbReference>
<dbReference type="FunFam" id="1.20.5.170:FF:000030">
    <property type="entry name" value="RUN and FYVE domain-containing protein 2 isoform X1"/>
    <property type="match status" value="1"/>
</dbReference>
<dbReference type="Gene3D" id="1.20.5.170">
    <property type="match status" value="1"/>
</dbReference>
<dbReference type="Gene3D" id="1.20.58.900">
    <property type="match status" value="1"/>
</dbReference>
<dbReference type="Gene3D" id="3.30.40.10">
    <property type="entry name" value="Zinc/RING finger domain, C3HC4 (zinc finger)"/>
    <property type="match status" value="1"/>
</dbReference>
<dbReference type="InterPro" id="IPR047333">
    <property type="entry name" value="FYVE_RUFY2"/>
</dbReference>
<dbReference type="InterPro" id="IPR047335">
    <property type="entry name" value="RUFY1-3"/>
</dbReference>
<dbReference type="InterPro" id="IPR004012">
    <property type="entry name" value="Run_dom"/>
</dbReference>
<dbReference type="InterPro" id="IPR037213">
    <property type="entry name" value="Run_dom_sf"/>
</dbReference>
<dbReference type="InterPro" id="IPR047332">
    <property type="entry name" value="RUN_RUFY2"/>
</dbReference>
<dbReference type="InterPro" id="IPR000306">
    <property type="entry name" value="Znf_FYVE"/>
</dbReference>
<dbReference type="InterPro" id="IPR017455">
    <property type="entry name" value="Znf_FYVE-rel"/>
</dbReference>
<dbReference type="InterPro" id="IPR011011">
    <property type="entry name" value="Znf_FYVE_PHD"/>
</dbReference>
<dbReference type="InterPro" id="IPR013083">
    <property type="entry name" value="Znf_RING/FYVE/PHD"/>
</dbReference>
<dbReference type="PANTHER" id="PTHR45956:SF3">
    <property type="entry name" value="RUN AND FYVE DOMAIN-CONTAINING PROTEIN 2"/>
    <property type="match status" value="1"/>
</dbReference>
<dbReference type="PANTHER" id="PTHR45956">
    <property type="entry name" value="RUN AND FYVE DOMAIN-CONTAINING PROTEIN 2-LIKE PROTEIN"/>
    <property type="match status" value="1"/>
</dbReference>
<dbReference type="Pfam" id="PF01363">
    <property type="entry name" value="FYVE"/>
    <property type="match status" value="1"/>
</dbReference>
<dbReference type="Pfam" id="PF02759">
    <property type="entry name" value="RUN"/>
    <property type="match status" value="1"/>
</dbReference>
<dbReference type="SMART" id="SM00064">
    <property type="entry name" value="FYVE"/>
    <property type="match status" value="1"/>
</dbReference>
<dbReference type="SMART" id="SM00593">
    <property type="entry name" value="RUN"/>
    <property type="match status" value="1"/>
</dbReference>
<dbReference type="SUPFAM" id="SSF57903">
    <property type="entry name" value="FYVE/PHD zinc finger"/>
    <property type="match status" value="1"/>
</dbReference>
<dbReference type="SUPFAM" id="SSF140741">
    <property type="entry name" value="RUN domain-like"/>
    <property type="match status" value="1"/>
</dbReference>
<dbReference type="PROSITE" id="PS50826">
    <property type="entry name" value="RUN"/>
    <property type="match status" value="1"/>
</dbReference>
<dbReference type="PROSITE" id="PS50178">
    <property type="entry name" value="ZF_FYVE"/>
    <property type="match status" value="1"/>
</dbReference>
<comment type="subunit">
    <text evidence="5">Interacts with BMX.</text>
</comment>
<comment type="interaction">
    <interactant intactId="EBI-19117969">
        <id>Q8WXA3-4</id>
    </interactant>
    <interactant intactId="EBI-744685">
        <id>Q14088</id>
        <label>RAB33A</label>
    </interactant>
    <organismsDiffer>false</organismsDiffer>
    <experiments>3</experiments>
</comment>
<comment type="interaction">
    <interactant intactId="EBI-19117969">
        <id>Q8WXA3-4</id>
    </interactant>
    <interactant intactId="EBI-3048549">
        <id>Q9H082</id>
        <label>RAB33B</label>
    </interactant>
    <organismsDiffer>false</organismsDiffer>
    <experiments>3</experiments>
</comment>
<comment type="subcellular location">
    <subcellularLocation>
        <location evidence="1">Nucleus</location>
    </subcellularLocation>
</comment>
<comment type="alternative products">
    <event type="alternative splicing"/>
    <isoform>
        <id>Q8WXA3-2</id>
        <name>1</name>
        <sequence type="displayed"/>
    </isoform>
    <isoform>
        <id>Q8WXA3-1</id>
        <name>5</name>
        <sequence type="described" ref="VSP_059506"/>
    </isoform>
    <isoform>
        <id>Q8WXA3-3</id>
        <name>2</name>
        <sequence type="described" ref="VSP_059505"/>
    </isoform>
    <isoform>
        <id>Q8WXA3-4</id>
        <name>3</name>
        <sequence type="described" ref="VSP_059508 VSP_059509 VSP_059510"/>
    </isoform>
    <isoform>
        <id>Q8WXA3-5</id>
        <name>4</name>
        <sequence type="described" ref="VSP_059507 VSP_059509 VSP_059510"/>
    </isoform>
</comment>
<comment type="tissue specificity">
    <text evidence="5">Expressed in brain, lung and testis.</text>
</comment>
<feature type="chain" id="PRO_0000245830" description="RUN and FYVE domain-containing protein 2">
    <location>
        <begin position="1"/>
        <end position="606"/>
    </location>
</feature>
<feature type="domain" description="RUN" evidence="4">
    <location>
        <begin position="37"/>
        <end position="169"/>
    </location>
</feature>
<feature type="zinc finger region" description="FYVE-type" evidence="3">
    <location>
        <begin position="540"/>
        <end position="598"/>
    </location>
</feature>
<feature type="coiled-coil region" evidence="2">
    <location>
        <begin position="210"/>
        <end position="534"/>
    </location>
</feature>
<feature type="binding site" evidence="3">
    <location>
        <position position="546"/>
    </location>
    <ligand>
        <name>Zn(2+)</name>
        <dbReference type="ChEBI" id="CHEBI:29105"/>
        <label>1</label>
    </ligand>
</feature>
<feature type="binding site" evidence="3">
    <location>
        <position position="549"/>
    </location>
    <ligand>
        <name>Zn(2+)</name>
        <dbReference type="ChEBI" id="CHEBI:29105"/>
        <label>1</label>
    </ligand>
</feature>
<feature type="binding site" evidence="3">
    <location>
        <position position="562"/>
    </location>
    <ligand>
        <name>Zn(2+)</name>
        <dbReference type="ChEBI" id="CHEBI:29105"/>
        <label>2</label>
    </ligand>
</feature>
<feature type="binding site" evidence="3">
    <location>
        <position position="565"/>
    </location>
    <ligand>
        <name>Zn(2+)</name>
        <dbReference type="ChEBI" id="CHEBI:29105"/>
        <label>2</label>
    </ligand>
</feature>
<feature type="binding site" evidence="3">
    <location>
        <position position="570"/>
    </location>
    <ligand>
        <name>Zn(2+)</name>
        <dbReference type="ChEBI" id="CHEBI:29105"/>
        <label>1</label>
    </ligand>
</feature>
<feature type="binding site" evidence="3">
    <location>
        <position position="573"/>
    </location>
    <ligand>
        <name>Zn(2+)</name>
        <dbReference type="ChEBI" id="CHEBI:29105"/>
        <label>1</label>
    </ligand>
</feature>
<feature type="binding site" evidence="3">
    <location>
        <position position="590"/>
    </location>
    <ligand>
        <name>Zn(2+)</name>
        <dbReference type="ChEBI" id="CHEBI:29105"/>
        <label>2</label>
    </ligand>
</feature>
<feature type="binding site" evidence="3">
    <location>
        <position position="593"/>
    </location>
    <ligand>
        <name>Zn(2+)</name>
        <dbReference type="ChEBI" id="CHEBI:29105"/>
        <label>2</label>
    </ligand>
</feature>
<feature type="splice variant" id="VSP_059505" description="In isoform 2.">
    <original>M</original>
    <variation>MTFQVWGWRREDASQVLAWVPDAEGGRRGMLTRRSL</variation>
    <location>
        <position position="1"/>
    </location>
</feature>
<feature type="splice variant" id="VSP_059506" description="In isoform 5.">
    <original>M</original>
    <variation>MGGDCLGLGGSRGRHGNAPPPLFRPVPARVLRHSGRGLEVPRRPGARTGP</variation>
    <location>
        <position position="1"/>
    </location>
</feature>
<feature type="splice variant" id="VSP_059507" description="In isoform 4.">
    <location>
        <begin position="2"/>
        <end position="59"/>
    </location>
</feature>
<feature type="splice variant" id="VSP_059508" description="In isoform 3.">
    <original>KTPLGRARAWLRLALMQKKMADYLRCLIIQRDLLS</original>
    <variation>N</variation>
    <location>
        <begin position="99"/>
        <end position="133"/>
    </location>
</feature>
<feature type="splice variant" id="VSP_059509" description="In isoform 3 and isoform 4.">
    <original>RLQQAEKAQMEAEDEDEKYLQECLSKSDSLQKQISQ</original>
    <variation>SDNDLLTQTRTIAMSLVKCASSDTQDQYKLVKDISF</variation>
    <location>
        <begin position="402"/>
        <end position="437"/>
    </location>
</feature>
<feature type="splice variant" id="VSP_059510" description="In isoform 3 and isoform 4.">
    <location>
        <begin position="438"/>
        <end position="606"/>
    </location>
</feature>
<feature type="sequence variant" id="VAR_060318" description="In dbSNP:rs11816774.">
    <original>C</original>
    <variation>S</variation>
    <location>
        <position position="573"/>
    </location>
</feature>
<reference key="1">
    <citation type="journal article" date="2002" name="J. Biol. Chem.">
        <title>Interaction between tyrosine kinase Etk and a RUN-domain and FYVE-domain containing protein RUFY1. A possible role of Etk in regulation of vesicle trafficking.</title>
        <authorList>
            <person name="Yang J."/>
            <person name="Kim O."/>
            <person name="Wu J."/>
            <person name="Qiu Y."/>
        </authorList>
    </citation>
    <scope>NUCLEOTIDE SEQUENCE [MRNA] (ISOFORM 1)</scope>
    <scope>INTERACTION WITH BMX</scope>
    <scope>TISSUE SPECIFICITY</scope>
</reference>
<reference key="2">
    <citation type="journal article" date="2000" name="DNA Res.">
        <title>Prediction of the coding sequences of unidentified human genes. XVII. The complete sequences of 100 new cDNA clones from brain which code for large proteins in vitro.</title>
        <authorList>
            <person name="Nagase T."/>
            <person name="Kikuno R."/>
            <person name="Ishikawa K."/>
            <person name="Hirosawa M."/>
            <person name="Ohara O."/>
        </authorList>
    </citation>
    <scope>NUCLEOTIDE SEQUENCE [LARGE SCALE MRNA] (ISOFORM 5)</scope>
    <source>
        <tissue>Brain</tissue>
    </source>
</reference>
<reference key="3">
    <citation type="journal article" date="2004" name="Nat. Genet.">
        <title>Complete sequencing and characterization of 21,243 full-length human cDNAs.</title>
        <authorList>
            <person name="Ota T."/>
            <person name="Suzuki Y."/>
            <person name="Nishikawa T."/>
            <person name="Otsuki T."/>
            <person name="Sugiyama T."/>
            <person name="Irie R."/>
            <person name="Wakamatsu A."/>
            <person name="Hayashi K."/>
            <person name="Sato H."/>
            <person name="Nagai K."/>
            <person name="Kimura K."/>
            <person name="Makita H."/>
            <person name="Sekine M."/>
            <person name="Obayashi M."/>
            <person name="Nishi T."/>
            <person name="Shibahara T."/>
            <person name="Tanaka T."/>
            <person name="Ishii S."/>
            <person name="Yamamoto J."/>
            <person name="Saito K."/>
            <person name="Kawai Y."/>
            <person name="Isono Y."/>
            <person name="Nakamura Y."/>
            <person name="Nagahari K."/>
            <person name="Murakami K."/>
            <person name="Yasuda T."/>
            <person name="Iwayanagi T."/>
            <person name="Wagatsuma M."/>
            <person name="Shiratori A."/>
            <person name="Sudo H."/>
            <person name="Hosoiri T."/>
            <person name="Kaku Y."/>
            <person name="Kodaira H."/>
            <person name="Kondo H."/>
            <person name="Sugawara M."/>
            <person name="Takahashi M."/>
            <person name="Kanda K."/>
            <person name="Yokoi T."/>
            <person name="Furuya T."/>
            <person name="Kikkawa E."/>
            <person name="Omura Y."/>
            <person name="Abe K."/>
            <person name="Kamihara K."/>
            <person name="Katsuta N."/>
            <person name="Sato K."/>
            <person name="Tanikawa M."/>
            <person name="Yamazaki M."/>
            <person name="Ninomiya K."/>
            <person name="Ishibashi T."/>
            <person name="Yamashita H."/>
            <person name="Murakawa K."/>
            <person name="Fujimori K."/>
            <person name="Tanai H."/>
            <person name="Kimata M."/>
            <person name="Watanabe M."/>
            <person name="Hiraoka S."/>
            <person name="Chiba Y."/>
            <person name="Ishida S."/>
            <person name="Ono Y."/>
            <person name="Takiguchi S."/>
            <person name="Watanabe S."/>
            <person name="Yosida M."/>
            <person name="Hotuta T."/>
            <person name="Kusano J."/>
            <person name="Kanehori K."/>
            <person name="Takahashi-Fujii A."/>
            <person name="Hara H."/>
            <person name="Tanase T.-O."/>
            <person name="Nomura Y."/>
            <person name="Togiya S."/>
            <person name="Komai F."/>
            <person name="Hara R."/>
            <person name="Takeuchi K."/>
            <person name="Arita M."/>
            <person name="Imose N."/>
            <person name="Musashino K."/>
            <person name="Yuuki H."/>
            <person name="Oshima A."/>
            <person name="Sasaki N."/>
            <person name="Aotsuka S."/>
            <person name="Yoshikawa Y."/>
            <person name="Matsunawa H."/>
            <person name="Ichihara T."/>
            <person name="Shiohata N."/>
            <person name="Sano S."/>
            <person name="Moriya S."/>
            <person name="Momiyama H."/>
            <person name="Satoh N."/>
            <person name="Takami S."/>
            <person name="Terashima Y."/>
            <person name="Suzuki O."/>
            <person name="Nakagawa S."/>
            <person name="Senoh A."/>
            <person name="Mizoguchi H."/>
            <person name="Goto Y."/>
            <person name="Shimizu F."/>
            <person name="Wakebe H."/>
            <person name="Hishigaki H."/>
            <person name="Watanabe T."/>
            <person name="Sugiyama A."/>
            <person name="Takemoto M."/>
            <person name="Kawakami B."/>
            <person name="Yamazaki M."/>
            <person name="Watanabe K."/>
            <person name="Kumagai A."/>
            <person name="Itakura S."/>
            <person name="Fukuzumi Y."/>
            <person name="Fujimori Y."/>
            <person name="Komiyama M."/>
            <person name="Tashiro H."/>
            <person name="Tanigami A."/>
            <person name="Fujiwara T."/>
            <person name="Ono T."/>
            <person name="Yamada K."/>
            <person name="Fujii Y."/>
            <person name="Ozaki K."/>
            <person name="Hirao M."/>
            <person name="Ohmori Y."/>
            <person name="Kawabata A."/>
            <person name="Hikiji T."/>
            <person name="Kobatake N."/>
            <person name="Inagaki H."/>
            <person name="Ikema Y."/>
            <person name="Okamoto S."/>
            <person name="Okitani R."/>
            <person name="Kawakami T."/>
            <person name="Noguchi S."/>
            <person name="Itoh T."/>
            <person name="Shigeta K."/>
            <person name="Senba T."/>
            <person name="Matsumura K."/>
            <person name="Nakajima Y."/>
            <person name="Mizuno T."/>
            <person name="Morinaga M."/>
            <person name="Sasaki M."/>
            <person name="Togashi T."/>
            <person name="Oyama M."/>
            <person name="Hata H."/>
            <person name="Watanabe M."/>
            <person name="Komatsu T."/>
            <person name="Mizushima-Sugano J."/>
            <person name="Satoh T."/>
            <person name="Shirai Y."/>
            <person name="Takahashi Y."/>
            <person name="Nakagawa K."/>
            <person name="Okumura K."/>
            <person name="Nagase T."/>
            <person name="Nomura N."/>
            <person name="Kikuchi H."/>
            <person name="Masuho Y."/>
            <person name="Yamashita R."/>
            <person name="Nakai K."/>
            <person name="Yada T."/>
            <person name="Nakamura Y."/>
            <person name="Ohara O."/>
            <person name="Isogai T."/>
            <person name="Sugano S."/>
        </authorList>
    </citation>
    <scope>NUCLEOTIDE SEQUENCE [LARGE SCALE MRNA] (ISOFORMS 2 AND 4)</scope>
    <source>
        <tissue>Amygdala</tissue>
        <tissue>Brain</tissue>
    </source>
</reference>
<reference key="4">
    <citation type="journal article" date="2004" name="Nature">
        <title>The DNA sequence and comparative analysis of human chromosome 10.</title>
        <authorList>
            <person name="Deloukas P."/>
            <person name="Earthrowl M.E."/>
            <person name="Grafham D.V."/>
            <person name="Rubenfield M."/>
            <person name="French L."/>
            <person name="Steward C.A."/>
            <person name="Sims S.K."/>
            <person name="Jones M.C."/>
            <person name="Searle S."/>
            <person name="Scott C."/>
            <person name="Howe K."/>
            <person name="Hunt S.E."/>
            <person name="Andrews T.D."/>
            <person name="Gilbert J.G.R."/>
            <person name="Swarbreck D."/>
            <person name="Ashurst J.L."/>
            <person name="Taylor A."/>
            <person name="Battles J."/>
            <person name="Bird C.P."/>
            <person name="Ainscough R."/>
            <person name="Almeida J.P."/>
            <person name="Ashwell R.I.S."/>
            <person name="Ambrose K.D."/>
            <person name="Babbage A.K."/>
            <person name="Bagguley C.L."/>
            <person name="Bailey J."/>
            <person name="Banerjee R."/>
            <person name="Bates K."/>
            <person name="Beasley H."/>
            <person name="Bray-Allen S."/>
            <person name="Brown A.J."/>
            <person name="Brown J.Y."/>
            <person name="Burford D.C."/>
            <person name="Burrill W."/>
            <person name="Burton J."/>
            <person name="Cahill P."/>
            <person name="Camire D."/>
            <person name="Carter N.P."/>
            <person name="Chapman J.C."/>
            <person name="Clark S.Y."/>
            <person name="Clarke G."/>
            <person name="Clee C.M."/>
            <person name="Clegg S."/>
            <person name="Corby N."/>
            <person name="Coulson A."/>
            <person name="Dhami P."/>
            <person name="Dutta I."/>
            <person name="Dunn M."/>
            <person name="Faulkner L."/>
            <person name="Frankish A."/>
            <person name="Frankland J.A."/>
            <person name="Garner P."/>
            <person name="Garnett J."/>
            <person name="Gribble S."/>
            <person name="Griffiths C."/>
            <person name="Grocock R."/>
            <person name="Gustafson E."/>
            <person name="Hammond S."/>
            <person name="Harley J.L."/>
            <person name="Hart E."/>
            <person name="Heath P.D."/>
            <person name="Ho T.P."/>
            <person name="Hopkins B."/>
            <person name="Horne J."/>
            <person name="Howden P.J."/>
            <person name="Huckle E."/>
            <person name="Hynds C."/>
            <person name="Johnson C."/>
            <person name="Johnson D."/>
            <person name="Kana A."/>
            <person name="Kay M."/>
            <person name="Kimberley A.M."/>
            <person name="Kershaw J.K."/>
            <person name="Kokkinaki M."/>
            <person name="Laird G.K."/>
            <person name="Lawlor S."/>
            <person name="Lee H.M."/>
            <person name="Leongamornlert D.A."/>
            <person name="Laird G."/>
            <person name="Lloyd C."/>
            <person name="Lloyd D.M."/>
            <person name="Loveland J."/>
            <person name="Lovell J."/>
            <person name="McLaren S."/>
            <person name="McLay K.E."/>
            <person name="McMurray A."/>
            <person name="Mashreghi-Mohammadi M."/>
            <person name="Matthews L."/>
            <person name="Milne S."/>
            <person name="Nickerson T."/>
            <person name="Nguyen M."/>
            <person name="Overton-Larty E."/>
            <person name="Palmer S.A."/>
            <person name="Pearce A.V."/>
            <person name="Peck A.I."/>
            <person name="Pelan S."/>
            <person name="Phillimore B."/>
            <person name="Porter K."/>
            <person name="Rice C.M."/>
            <person name="Rogosin A."/>
            <person name="Ross M.T."/>
            <person name="Sarafidou T."/>
            <person name="Sehra H.K."/>
            <person name="Shownkeen R."/>
            <person name="Skuce C.D."/>
            <person name="Smith M."/>
            <person name="Standring L."/>
            <person name="Sycamore N."/>
            <person name="Tester J."/>
            <person name="Thorpe A."/>
            <person name="Torcasso W."/>
            <person name="Tracey A."/>
            <person name="Tromans A."/>
            <person name="Tsolas J."/>
            <person name="Wall M."/>
            <person name="Walsh J."/>
            <person name="Wang H."/>
            <person name="Weinstock K."/>
            <person name="West A.P."/>
            <person name="Willey D.L."/>
            <person name="Whitehead S.L."/>
            <person name="Wilming L."/>
            <person name="Wray P.W."/>
            <person name="Young L."/>
            <person name="Chen Y."/>
            <person name="Lovering R.C."/>
            <person name="Moschonas N.K."/>
            <person name="Siebert R."/>
            <person name="Fechtel K."/>
            <person name="Bentley D."/>
            <person name="Durbin R.M."/>
            <person name="Hubbard T."/>
            <person name="Doucette-Stamm L."/>
            <person name="Beck S."/>
            <person name="Smith D.R."/>
            <person name="Rogers J."/>
        </authorList>
    </citation>
    <scope>NUCLEOTIDE SEQUENCE [LARGE SCALE GENOMIC DNA]</scope>
</reference>
<reference key="5">
    <citation type="submission" date="2005-07" db="EMBL/GenBank/DDBJ databases">
        <authorList>
            <person name="Mural R.J."/>
            <person name="Istrail S."/>
            <person name="Sutton G.G."/>
            <person name="Florea L."/>
            <person name="Halpern A.L."/>
            <person name="Mobarry C.M."/>
            <person name="Lippert R."/>
            <person name="Walenz B."/>
            <person name="Shatkay H."/>
            <person name="Dew I."/>
            <person name="Miller J.R."/>
            <person name="Flanigan M.J."/>
            <person name="Edwards N.J."/>
            <person name="Bolanos R."/>
            <person name="Fasulo D."/>
            <person name="Halldorsson B.V."/>
            <person name="Hannenhalli S."/>
            <person name="Turner R."/>
            <person name="Yooseph S."/>
            <person name="Lu F."/>
            <person name="Nusskern D.R."/>
            <person name="Shue B.C."/>
            <person name="Zheng X.H."/>
            <person name="Zhong F."/>
            <person name="Delcher A.L."/>
            <person name="Huson D.H."/>
            <person name="Kravitz S.A."/>
            <person name="Mouchard L."/>
            <person name="Reinert K."/>
            <person name="Remington K.A."/>
            <person name="Clark A.G."/>
            <person name="Waterman M.S."/>
            <person name="Eichler E.E."/>
            <person name="Adams M.D."/>
            <person name="Hunkapiller M.W."/>
            <person name="Myers E.W."/>
            <person name="Venter J.C."/>
        </authorList>
    </citation>
    <scope>NUCLEOTIDE SEQUENCE [LARGE SCALE GENOMIC DNA]</scope>
</reference>
<reference key="6">
    <citation type="journal article" date="2004" name="Genome Res.">
        <title>The status, quality, and expansion of the NIH full-length cDNA project: the Mammalian Gene Collection (MGC).</title>
        <authorList>
            <consortium name="The MGC Project Team"/>
        </authorList>
    </citation>
    <scope>NUCLEOTIDE SEQUENCE [LARGE SCALE MRNA] (ISOFORM 3)</scope>
</reference>
<reference key="7">
    <citation type="journal article" date="2002" name="DNA Res.">
        <title>Construction of expression-ready cDNA clones for KIAA genes: manual curation of 330 KIAA cDNA clones.</title>
        <authorList>
            <person name="Nakajima D."/>
            <person name="Okazaki N."/>
            <person name="Yamakawa H."/>
            <person name="Kikuno R."/>
            <person name="Ohara O."/>
            <person name="Nagase T."/>
        </authorList>
    </citation>
    <scope>SEQUENCE REVISION</scope>
</reference>
<reference key="8">
    <citation type="submission" date="2001-08" db="EMBL/GenBank/DDBJ databases">
        <title>Rabip4R, a Run- and FYVE-domain containing protein related to Rabip4.</title>
        <authorList>
            <person name="Hong W."/>
        </authorList>
    </citation>
    <scope>NUCLEOTIDE SEQUENCE [MRNA] OF 17-606 (ISOFORM 1)</scope>
</reference>
<reference key="9">
    <citation type="journal article" date="2008" name="Proc. Natl. Acad. Sci. U.S.A.">
        <title>A quantitative atlas of mitotic phosphorylation.</title>
        <authorList>
            <person name="Dephoure N."/>
            <person name="Zhou C."/>
            <person name="Villen J."/>
            <person name="Beausoleil S.A."/>
            <person name="Bakalarski C.E."/>
            <person name="Elledge S.J."/>
            <person name="Gygi S.P."/>
        </authorList>
    </citation>
    <scope>IDENTIFICATION BY MASS SPECTROMETRY [LARGE SCALE ANALYSIS]</scope>
    <source>
        <tissue>Cervix carcinoma</tissue>
    </source>
</reference>
<keyword id="KW-0025">Alternative splicing</keyword>
<keyword id="KW-0175">Coiled coil</keyword>
<keyword id="KW-0479">Metal-binding</keyword>
<keyword id="KW-0539">Nucleus</keyword>
<keyword id="KW-1267">Proteomics identification</keyword>
<keyword id="KW-1185">Reference proteome</keyword>
<keyword id="KW-0862">Zinc</keyword>
<keyword id="KW-0863">Zinc-finger</keyword>
<organism>
    <name type="scientific">Homo sapiens</name>
    <name type="common">Human</name>
    <dbReference type="NCBI Taxonomy" id="9606"/>
    <lineage>
        <taxon>Eukaryota</taxon>
        <taxon>Metazoa</taxon>
        <taxon>Chordata</taxon>
        <taxon>Craniata</taxon>
        <taxon>Vertebrata</taxon>
        <taxon>Euteleostomi</taxon>
        <taxon>Mammalia</taxon>
        <taxon>Eutheria</taxon>
        <taxon>Euarchontoglires</taxon>
        <taxon>Primates</taxon>
        <taxon>Haplorrhini</taxon>
        <taxon>Catarrhini</taxon>
        <taxon>Hominidae</taxon>
        <taxon>Homo</taxon>
    </lineage>
</organism>
<protein>
    <recommendedName>
        <fullName>RUN and FYVE domain-containing protein 2</fullName>
    </recommendedName>
    <alternativeName>
        <fullName>Rab4-interacting protein related</fullName>
    </alternativeName>
</protein>